<dbReference type="EC" id="4.2.3.4" evidence="1"/>
<dbReference type="EC" id="2.5.1.19" evidence="1"/>
<dbReference type="EC" id="2.7.1.71" evidence="1"/>
<dbReference type="EC" id="4.2.1.10" evidence="1"/>
<dbReference type="EC" id="1.1.1.25" evidence="1"/>
<dbReference type="EMBL" id="GG692395">
    <property type="protein sequence ID" value="EER35322.1"/>
    <property type="molecule type" value="Genomic_DNA"/>
</dbReference>
<dbReference type="RefSeq" id="XP_002545280.1">
    <property type="nucleotide sequence ID" value="XM_002545234.1"/>
</dbReference>
<dbReference type="SMR" id="C5M1X2"/>
<dbReference type="STRING" id="294747.C5M1X2"/>
<dbReference type="EnsemblFungi" id="CTRG_00061-t43_1">
    <property type="protein sequence ID" value="CTRG_00061-t43_1-p1"/>
    <property type="gene ID" value="CTRG_00061"/>
</dbReference>
<dbReference type="GeneID" id="8301951"/>
<dbReference type="KEGG" id="ctp:CTRG_00061"/>
<dbReference type="VEuPathDB" id="FungiDB:CTRG_00061"/>
<dbReference type="eggNOG" id="KOG0692">
    <property type="taxonomic scope" value="Eukaryota"/>
</dbReference>
<dbReference type="HOGENOM" id="CLU_001201_1_2_1"/>
<dbReference type="OrthoDB" id="197068at2759"/>
<dbReference type="UniPathway" id="UPA00053">
    <property type="reaction ID" value="UER00085"/>
</dbReference>
<dbReference type="UniPathway" id="UPA00053">
    <property type="reaction ID" value="UER00086"/>
</dbReference>
<dbReference type="UniPathway" id="UPA00053">
    <property type="reaction ID" value="UER00087"/>
</dbReference>
<dbReference type="UniPathway" id="UPA00053">
    <property type="reaction ID" value="UER00088"/>
</dbReference>
<dbReference type="UniPathway" id="UPA00053">
    <property type="reaction ID" value="UER00089"/>
</dbReference>
<dbReference type="Proteomes" id="UP000002037">
    <property type="component" value="Unassembled WGS sequence"/>
</dbReference>
<dbReference type="GO" id="GO:0005737">
    <property type="term" value="C:cytoplasm"/>
    <property type="evidence" value="ECO:0007669"/>
    <property type="project" value="UniProtKB-SubCell"/>
</dbReference>
<dbReference type="GO" id="GO:0003855">
    <property type="term" value="F:3-dehydroquinate dehydratase activity"/>
    <property type="evidence" value="ECO:0007669"/>
    <property type="project" value="UniProtKB-UniRule"/>
</dbReference>
<dbReference type="GO" id="GO:0003856">
    <property type="term" value="F:3-dehydroquinate synthase activity"/>
    <property type="evidence" value="ECO:0007669"/>
    <property type="project" value="UniProtKB-UniRule"/>
</dbReference>
<dbReference type="GO" id="GO:0003866">
    <property type="term" value="F:3-phosphoshikimate 1-carboxyvinyltransferase activity"/>
    <property type="evidence" value="ECO:0007669"/>
    <property type="project" value="UniProtKB-UniRule"/>
</dbReference>
<dbReference type="GO" id="GO:0005524">
    <property type="term" value="F:ATP binding"/>
    <property type="evidence" value="ECO:0007669"/>
    <property type="project" value="UniProtKB-UniRule"/>
</dbReference>
<dbReference type="GO" id="GO:0046872">
    <property type="term" value="F:metal ion binding"/>
    <property type="evidence" value="ECO:0007669"/>
    <property type="project" value="UniProtKB-UniRule"/>
</dbReference>
<dbReference type="GO" id="GO:0004764">
    <property type="term" value="F:shikimate 3-dehydrogenase (NADP+) activity"/>
    <property type="evidence" value="ECO:0007669"/>
    <property type="project" value="UniProtKB-UniRule"/>
</dbReference>
<dbReference type="GO" id="GO:0004765">
    <property type="term" value="F:shikimate kinase activity"/>
    <property type="evidence" value="ECO:0007669"/>
    <property type="project" value="UniProtKB-UniRule"/>
</dbReference>
<dbReference type="GO" id="GO:0008652">
    <property type="term" value="P:amino acid biosynthetic process"/>
    <property type="evidence" value="ECO:0007669"/>
    <property type="project" value="UniProtKB-KW"/>
</dbReference>
<dbReference type="GO" id="GO:0009073">
    <property type="term" value="P:aromatic amino acid family biosynthetic process"/>
    <property type="evidence" value="ECO:0007669"/>
    <property type="project" value="UniProtKB-UniRule"/>
</dbReference>
<dbReference type="GO" id="GO:0009423">
    <property type="term" value="P:chorismate biosynthetic process"/>
    <property type="evidence" value="ECO:0007669"/>
    <property type="project" value="UniProtKB-UniRule"/>
</dbReference>
<dbReference type="CDD" id="cd00502">
    <property type="entry name" value="DHQase_I"/>
    <property type="match status" value="1"/>
</dbReference>
<dbReference type="CDD" id="cd08195">
    <property type="entry name" value="DHQS"/>
    <property type="match status" value="1"/>
</dbReference>
<dbReference type="CDD" id="cd01556">
    <property type="entry name" value="EPSP_synthase"/>
    <property type="match status" value="1"/>
</dbReference>
<dbReference type="CDD" id="cd01065">
    <property type="entry name" value="NAD_bind_Shikimate_DH"/>
    <property type="match status" value="1"/>
</dbReference>
<dbReference type="CDD" id="cd00464">
    <property type="entry name" value="SK"/>
    <property type="match status" value="1"/>
</dbReference>
<dbReference type="FunFam" id="1.20.1090.10:FF:000007">
    <property type="entry name" value="Pentafunctional AROM polypeptide"/>
    <property type="match status" value="1"/>
</dbReference>
<dbReference type="FunFam" id="3.20.20.70:FF:000135">
    <property type="entry name" value="Pentafunctional AROM polypeptide"/>
    <property type="match status" value="1"/>
</dbReference>
<dbReference type="FunFam" id="3.40.50.1970:FF:000007">
    <property type="entry name" value="Pentafunctional AROM polypeptide"/>
    <property type="match status" value="1"/>
</dbReference>
<dbReference type="FunFam" id="3.40.50.300:FF:001256">
    <property type="entry name" value="Pentafunctional AROM polypeptide"/>
    <property type="match status" value="1"/>
</dbReference>
<dbReference type="FunFam" id="3.65.10.10:FF:000007">
    <property type="entry name" value="Pentafunctional AROM polypeptide"/>
    <property type="match status" value="1"/>
</dbReference>
<dbReference type="FunFam" id="3.65.10.10:FF:000008">
    <property type="entry name" value="Pentafunctional AROM polypeptide"/>
    <property type="match status" value="1"/>
</dbReference>
<dbReference type="Gene3D" id="3.40.50.1970">
    <property type="match status" value="1"/>
</dbReference>
<dbReference type="Gene3D" id="3.20.20.70">
    <property type="entry name" value="Aldolase class I"/>
    <property type="match status" value="1"/>
</dbReference>
<dbReference type="Gene3D" id="1.20.1090.10">
    <property type="entry name" value="Dehydroquinate synthase-like - alpha domain"/>
    <property type="match status" value="1"/>
</dbReference>
<dbReference type="Gene3D" id="3.65.10.10">
    <property type="entry name" value="Enolpyruvate transferase domain"/>
    <property type="match status" value="2"/>
</dbReference>
<dbReference type="Gene3D" id="3.40.50.10860">
    <property type="entry name" value="Leucine Dehydrogenase, chain A, domain 1"/>
    <property type="match status" value="1"/>
</dbReference>
<dbReference type="Gene3D" id="3.40.50.720">
    <property type="entry name" value="NAD(P)-binding Rossmann-like Domain"/>
    <property type="match status" value="1"/>
</dbReference>
<dbReference type="Gene3D" id="3.40.50.300">
    <property type="entry name" value="P-loop containing nucleotide triphosphate hydrolases"/>
    <property type="match status" value="1"/>
</dbReference>
<dbReference type="HAMAP" id="MF_00210">
    <property type="entry name" value="EPSP_synth"/>
    <property type="match status" value="1"/>
</dbReference>
<dbReference type="HAMAP" id="MF_03143">
    <property type="entry name" value="Pentafunct_AroM"/>
    <property type="match status" value="1"/>
</dbReference>
<dbReference type="HAMAP" id="MF_00109">
    <property type="entry name" value="Shikimate_kinase"/>
    <property type="match status" value="1"/>
</dbReference>
<dbReference type="InterPro" id="IPR013785">
    <property type="entry name" value="Aldolase_TIM"/>
</dbReference>
<dbReference type="InterPro" id="IPR046346">
    <property type="entry name" value="Aminoacid_DH-like_N_sf"/>
</dbReference>
<dbReference type="InterPro" id="IPR016037">
    <property type="entry name" value="DHQ_synth_AroB"/>
</dbReference>
<dbReference type="InterPro" id="IPR030960">
    <property type="entry name" value="DHQS/DOIS_N"/>
</dbReference>
<dbReference type="InterPro" id="IPR056179">
    <property type="entry name" value="DHQS_C"/>
</dbReference>
<dbReference type="InterPro" id="IPR001381">
    <property type="entry name" value="DHquinase_I"/>
</dbReference>
<dbReference type="InterPro" id="IPR001986">
    <property type="entry name" value="Enolpyruvate_Tfrase_dom"/>
</dbReference>
<dbReference type="InterPro" id="IPR036968">
    <property type="entry name" value="Enolpyruvate_Tfrase_sf"/>
</dbReference>
<dbReference type="InterPro" id="IPR006264">
    <property type="entry name" value="EPSP_synthase"/>
</dbReference>
<dbReference type="InterPro" id="IPR023193">
    <property type="entry name" value="EPSP_synthase_CS"/>
</dbReference>
<dbReference type="InterPro" id="IPR036291">
    <property type="entry name" value="NAD(P)-bd_dom_sf"/>
</dbReference>
<dbReference type="InterPro" id="IPR027417">
    <property type="entry name" value="P-loop_NTPase"/>
</dbReference>
<dbReference type="InterPro" id="IPR008289">
    <property type="entry name" value="Pentafunct_AroM"/>
</dbReference>
<dbReference type="InterPro" id="IPR013792">
    <property type="entry name" value="RNA3'P_cycl/enolpyr_Trfase_a/b"/>
</dbReference>
<dbReference type="InterPro" id="IPR041121">
    <property type="entry name" value="SDH_C"/>
</dbReference>
<dbReference type="InterPro" id="IPR031322">
    <property type="entry name" value="Shikimate/glucono_kinase"/>
</dbReference>
<dbReference type="InterPro" id="IPR013708">
    <property type="entry name" value="Shikimate_DH-bd_N"/>
</dbReference>
<dbReference type="InterPro" id="IPR010110">
    <property type="entry name" value="Shikimate_DH_AroM-type"/>
</dbReference>
<dbReference type="InterPro" id="IPR000623">
    <property type="entry name" value="Shikimate_kinase/TSH1"/>
</dbReference>
<dbReference type="InterPro" id="IPR006151">
    <property type="entry name" value="Shikm_DH/Glu-tRNA_Rdtase"/>
</dbReference>
<dbReference type="NCBIfam" id="TIGR01356">
    <property type="entry name" value="aroA"/>
    <property type="match status" value="1"/>
</dbReference>
<dbReference type="NCBIfam" id="TIGR01357">
    <property type="entry name" value="aroB"/>
    <property type="match status" value="1"/>
</dbReference>
<dbReference type="NCBIfam" id="TIGR01093">
    <property type="entry name" value="aroD"/>
    <property type="match status" value="1"/>
</dbReference>
<dbReference type="NCBIfam" id="TIGR01809">
    <property type="entry name" value="Shik-DH-AROM"/>
    <property type="match status" value="1"/>
</dbReference>
<dbReference type="PANTHER" id="PTHR21090">
    <property type="entry name" value="AROM/DEHYDROQUINATE SYNTHASE"/>
    <property type="match status" value="1"/>
</dbReference>
<dbReference type="PANTHER" id="PTHR21090:SF5">
    <property type="entry name" value="PENTAFUNCTIONAL AROM POLYPEPTIDE"/>
    <property type="match status" value="1"/>
</dbReference>
<dbReference type="Pfam" id="PF01761">
    <property type="entry name" value="DHQ_synthase"/>
    <property type="match status" value="1"/>
</dbReference>
<dbReference type="Pfam" id="PF24621">
    <property type="entry name" value="DHQS_C"/>
    <property type="match status" value="1"/>
</dbReference>
<dbReference type="Pfam" id="PF01487">
    <property type="entry name" value="DHquinase_I"/>
    <property type="match status" value="1"/>
</dbReference>
<dbReference type="Pfam" id="PF00275">
    <property type="entry name" value="EPSP_synthase"/>
    <property type="match status" value="1"/>
</dbReference>
<dbReference type="Pfam" id="PF18317">
    <property type="entry name" value="SDH_C"/>
    <property type="match status" value="1"/>
</dbReference>
<dbReference type="Pfam" id="PF01488">
    <property type="entry name" value="Shikimate_DH"/>
    <property type="match status" value="1"/>
</dbReference>
<dbReference type="Pfam" id="PF08501">
    <property type="entry name" value="Shikimate_dh_N"/>
    <property type="match status" value="1"/>
</dbReference>
<dbReference type="Pfam" id="PF01202">
    <property type="entry name" value="SKI"/>
    <property type="match status" value="1"/>
</dbReference>
<dbReference type="PIRSF" id="PIRSF000514">
    <property type="entry name" value="Pentafunct_AroM"/>
    <property type="match status" value="1"/>
</dbReference>
<dbReference type="PRINTS" id="PR01100">
    <property type="entry name" value="SHIKIMTKNASE"/>
</dbReference>
<dbReference type="SUPFAM" id="SSF51569">
    <property type="entry name" value="Aldolase"/>
    <property type="match status" value="1"/>
</dbReference>
<dbReference type="SUPFAM" id="SSF53223">
    <property type="entry name" value="Aminoacid dehydrogenase-like, N-terminal domain"/>
    <property type="match status" value="1"/>
</dbReference>
<dbReference type="SUPFAM" id="SSF56796">
    <property type="entry name" value="Dehydroquinate synthase-like"/>
    <property type="match status" value="1"/>
</dbReference>
<dbReference type="SUPFAM" id="SSF55205">
    <property type="entry name" value="EPT/RTPC-like"/>
    <property type="match status" value="1"/>
</dbReference>
<dbReference type="SUPFAM" id="SSF51735">
    <property type="entry name" value="NAD(P)-binding Rossmann-fold domains"/>
    <property type="match status" value="1"/>
</dbReference>
<dbReference type="SUPFAM" id="SSF52540">
    <property type="entry name" value="P-loop containing nucleoside triphosphate hydrolases"/>
    <property type="match status" value="1"/>
</dbReference>
<dbReference type="PROSITE" id="PS00104">
    <property type="entry name" value="EPSP_SYNTHASE_1"/>
    <property type="match status" value="1"/>
</dbReference>
<dbReference type="PROSITE" id="PS00885">
    <property type="entry name" value="EPSP_SYNTHASE_2"/>
    <property type="match status" value="1"/>
</dbReference>
<evidence type="ECO:0000255" key="1">
    <source>
        <dbReference type="HAMAP-Rule" id="MF_03143"/>
    </source>
</evidence>
<sequence>MSIEKVPILGKETIHVGYGIQDHIVTEVVDNLASSTYVIVTDTNVEKTPQFSKLTNDFTKVLNEKRPDSRVLTYSVPPGENNKNRATKAAVEDFLLQQGCTRDTVIIAVGGGVIGDMIGFVAATFMRGVRVVQVPTTLLAMVDSSVGGKTAIDTPLGKNFIGAFHQPQYVFIDVSYLESLPTRQFINGMAEVVKTAAIWNEEEFTRLENFSKQFLSVVTAKNPDLLSIKEELVKTVLESVRVKAEVVSSDEKESSLRNLLNFGHTIGHAIEAIVTPEALHGECVSIGMIKEAELARYLGILPPVAVARLSKCLVAYGLPVTIDDKLFLQRVGPKRHNIEIDLLLKKMSIDKKNDGSKIRSVILESIGKCYQLKAHEVSKQDLTFVLTDEVLVHPFKQPPQENVITPPGSKSISNRALILAALGTGTVRIKNLLHSDDTKHMLAAVAALKGAEITTEDNGETIVLKGNGGDLVTCDEELYLGNAGTASRFLTTVASLVGKSESNDHVVLTGNARMQERPIGPLVDALRSNGSEVQYLNKEGSLPLKITAGNGLKGGRIELAATISSQYVSSILMCAPYAKEPVTLALVGGKPISQLYIDMTCAMMKSFGIEVTKSTTEDYTYHIPKGTYKNPAEYVIESDASSATYPLAFAAMTGTSCTVPNIGSSSLQGDARFAVDVLKPMGCKVEQTATSTTVTGPPRGQLKPLPHVDMEPMTDAFLTASVVAAVAQGDSSTTITGIANQRVKECNRIEAMITELAKFGVKADELPDGIEIHGIDIADLKTPSIEKRGVCSYDDHRVAMSFSLLSGLCKEPVLILERSTTGKTWPGWWDILHSKFNIELDGYEPPFGTDKEGTKASDKSIIIIGMRGTGKSTLSEWLASFMGFKSLDMDVYLEEKLGNDIKSLIKEKGWEYFREQEAAIAKECFSKFSKGYVLSTGGGIVEGAENRQRLKDYITAGGIVLHLHRDLEETVSFLSVDTTRPAYTSEVKEVWLRREQWYDDCSNYHFYSSHCNTEEEFDHLRKSFVNFIKIITGTEKASIPSGRSAALSLTVPDLNAISSQLGDIAVGAEAVELRVDLLKETSSSFIADQIAVIRKHIDLPIIYTVRTESQGGKFPDNKVEELRNLLLLGVKLGVAFIDVELTAPVEVIEEIIIKKGYTRVIASYNDIAGKLGWSNVEWTNKYNQGVSINADIVKLIGRASSLQDNLELEVFRKQNTLKPLLAVNLGSQGKLSQVLNTIFTPITQESLPNEDGLLTIKEINQIYFDIGGLTAKKFWVIGSPIQHSRSPNLHNAAYKALNLPFTFDRFESTDADQVYKELINKPDFGGLAITMPLKLDIMKYATELSDAAQKIGAVNTLVPLEGGYLGDNTDWVGITSSFTRAGVPPNPRVNGLVIGAGGTSRAAIYALHQIGCEKIYLANRTTSKLNEIKDSFPKEYNLEVLETEDQAEKAQNVGLAVSCVPADKPLDESLLQKVEKILANGEKSSNGFKSTLLEASYKPRVTPMMKIADEKFKWRAIPGVEMLVNQGDRQFQIHTGFTAPYDVIHRAVVEE</sequence>
<accession>C5M1X2</accession>
<keyword id="KW-0028">Amino-acid biosynthesis</keyword>
<keyword id="KW-0057">Aromatic amino acid biosynthesis</keyword>
<keyword id="KW-0067">ATP-binding</keyword>
<keyword id="KW-0963">Cytoplasm</keyword>
<keyword id="KW-0418">Kinase</keyword>
<keyword id="KW-0456">Lyase</keyword>
<keyword id="KW-0479">Metal-binding</keyword>
<keyword id="KW-0511">Multifunctional enzyme</keyword>
<keyword id="KW-0521">NADP</keyword>
<keyword id="KW-0547">Nucleotide-binding</keyword>
<keyword id="KW-0560">Oxidoreductase</keyword>
<keyword id="KW-1185">Reference proteome</keyword>
<keyword id="KW-0808">Transferase</keyword>
<keyword id="KW-0862">Zinc</keyword>
<proteinExistence type="inferred from homology"/>
<gene>
    <name evidence="1" type="primary">ARO1</name>
    <name type="ORF">CTRG_00061</name>
</gene>
<feature type="chain" id="PRO_0000406712" description="Pentafunctional AROM polypeptide">
    <location>
        <begin position="1"/>
        <end position="1551"/>
    </location>
</feature>
<feature type="region of interest" description="3-dehydroquinate synthase">
    <location>
        <begin position="1"/>
        <end position="379"/>
    </location>
</feature>
<feature type="region of interest" description="EPSP synthase">
    <location>
        <begin position="392"/>
        <end position="838"/>
    </location>
</feature>
<feature type="region of interest" description="Shikimate kinase">
    <location>
        <begin position="858"/>
        <end position="1048"/>
    </location>
</feature>
<feature type="region of interest" description="3-dehydroquinase">
    <location>
        <begin position="1049"/>
        <end position="1258"/>
    </location>
</feature>
<feature type="region of interest" description="Shikimate dehydrogenase">
    <location>
        <begin position="1271"/>
        <end position="1551"/>
    </location>
</feature>
<feature type="active site" description="Proton acceptor; for 3-dehydroquinate synthase activity" evidence="1">
    <location>
        <position position="253"/>
    </location>
</feature>
<feature type="active site" description="Proton acceptor; for 3-dehydroquinate synthase activity" evidence="1">
    <location>
        <position position="268"/>
    </location>
</feature>
<feature type="active site" description="Schiff-base intermediate with substrate; for 3-dehydroquinate dehydratase activity" evidence="1">
    <location>
        <position position="1194"/>
    </location>
</feature>
<feature type="binding site" evidence="1">
    <location>
        <begin position="42"/>
        <end position="44"/>
    </location>
    <ligand>
        <name>NAD(+)</name>
        <dbReference type="ChEBI" id="CHEBI:57540"/>
    </ligand>
</feature>
<feature type="binding site" evidence="1">
    <location>
        <begin position="80"/>
        <end position="83"/>
    </location>
    <ligand>
        <name>NAD(+)</name>
        <dbReference type="ChEBI" id="CHEBI:57540"/>
    </ligand>
</feature>
<feature type="binding site" evidence="1">
    <location>
        <begin position="111"/>
        <end position="113"/>
    </location>
    <ligand>
        <name>NAD(+)</name>
        <dbReference type="ChEBI" id="CHEBI:57540"/>
    </ligand>
</feature>
<feature type="binding site" evidence="1">
    <location>
        <position position="116"/>
    </location>
    <ligand>
        <name>NAD(+)</name>
        <dbReference type="ChEBI" id="CHEBI:57540"/>
    </ligand>
</feature>
<feature type="binding site" evidence="1">
    <location>
        <position position="127"/>
    </location>
    <ligand>
        <name>7-phospho-2-dehydro-3-deoxy-D-arabino-heptonate</name>
        <dbReference type="ChEBI" id="CHEBI:58394"/>
    </ligand>
</feature>
<feature type="binding site" evidence="1">
    <location>
        <begin position="136"/>
        <end position="137"/>
    </location>
    <ligand>
        <name>NAD(+)</name>
        <dbReference type="ChEBI" id="CHEBI:57540"/>
    </ligand>
</feature>
<feature type="binding site" evidence="1">
    <location>
        <position position="143"/>
    </location>
    <ligand>
        <name>7-phospho-2-dehydro-3-deoxy-D-arabino-heptonate</name>
        <dbReference type="ChEBI" id="CHEBI:58394"/>
    </ligand>
</feature>
<feature type="binding site" evidence="1">
    <location>
        <position position="149"/>
    </location>
    <ligand>
        <name>7-phospho-2-dehydro-3-deoxy-D-arabino-heptonate</name>
        <dbReference type="ChEBI" id="CHEBI:58394"/>
    </ligand>
</feature>
<feature type="binding site" evidence="1">
    <location>
        <position position="158"/>
    </location>
    <ligand>
        <name>NAD(+)</name>
        <dbReference type="ChEBI" id="CHEBI:57540"/>
    </ligand>
</feature>
<feature type="binding site" evidence="1">
    <location>
        <position position="159"/>
    </location>
    <ligand>
        <name>7-phospho-2-dehydro-3-deoxy-D-arabino-heptonate</name>
        <dbReference type="ChEBI" id="CHEBI:58394"/>
    </ligand>
</feature>
<feature type="binding site" evidence="1">
    <location>
        <begin position="176"/>
        <end position="179"/>
    </location>
    <ligand>
        <name>NAD(+)</name>
        <dbReference type="ChEBI" id="CHEBI:57540"/>
    </ligand>
</feature>
<feature type="binding site" evidence="1">
    <location>
        <position position="187"/>
    </location>
    <ligand>
        <name>NAD(+)</name>
        <dbReference type="ChEBI" id="CHEBI:57540"/>
    </ligand>
</feature>
<feature type="binding site" evidence="1">
    <location>
        <begin position="191"/>
        <end position="194"/>
    </location>
    <ligand>
        <name>7-phospho-2-dehydro-3-deoxy-D-arabino-heptonate</name>
        <dbReference type="ChEBI" id="CHEBI:58394"/>
    </ligand>
</feature>
<feature type="binding site" evidence="1">
    <location>
        <position position="191"/>
    </location>
    <ligand>
        <name>Zn(2+)</name>
        <dbReference type="ChEBI" id="CHEBI:29105"/>
        <note>catalytic</note>
    </ligand>
</feature>
<feature type="binding site" evidence="1">
    <location>
        <position position="243"/>
    </location>
    <ligand>
        <name>7-phospho-2-dehydro-3-deoxy-D-arabino-heptonate</name>
        <dbReference type="ChEBI" id="CHEBI:58394"/>
    </ligand>
</feature>
<feature type="binding site" evidence="1">
    <location>
        <begin position="257"/>
        <end position="261"/>
    </location>
    <ligand>
        <name>7-phospho-2-dehydro-3-deoxy-D-arabino-heptonate</name>
        <dbReference type="ChEBI" id="CHEBI:58394"/>
    </ligand>
</feature>
<feature type="binding site" evidence="1">
    <location>
        <position position="264"/>
    </location>
    <ligand>
        <name>7-phospho-2-dehydro-3-deoxy-D-arabino-heptonate</name>
        <dbReference type="ChEBI" id="CHEBI:58394"/>
    </ligand>
</feature>
<feature type="binding site" evidence="1">
    <location>
        <position position="264"/>
    </location>
    <ligand>
        <name>Zn(2+)</name>
        <dbReference type="ChEBI" id="CHEBI:29105"/>
        <note>catalytic</note>
    </ligand>
</feature>
<feature type="binding site" evidence="1">
    <location>
        <position position="280"/>
    </location>
    <ligand>
        <name>7-phospho-2-dehydro-3-deoxy-D-arabino-heptonate</name>
        <dbReference type="ChEBI" id="CHEBI:58394"/>
    </ligand>
</feature>
<feature type="binding site" evidence="1">
    <location>
        <position position="280"/>
    </location>
    <ligand>
        <name>Zn(2+)</name>
        <dbReference type="ChEBI" id="CHEBI:29105"/>
        <note>catalytic</note>
    </ligand>
</feature>
<feature type="binding site" evidence="1">
    <location>
        <position position="351"/>
    </location>
    <ligand>
        <name>7-phospho-2-dehydro-3-deoxy-D-arabino-heptonate</name>
        <dbReference type="ChEBI" id="CHEBI:58394"/>
    </ligand>
</feature>
<feature type="binding site" evidence="1">
    <location>
        <begin position="865"/>
        <end position="872"/>
    </location>
    <ligand>
        <name>ATP</name>
        <dbReference type="ChEBI" id="CHEBI:30616"/>
    </ligand>
</feature>
<protein>
    <recommendedName>
        <fullName evidence="1">Pentafunctional AROM polypeptide</fullName>
    </recommendedName>
    <domain>
        <recommendedName>
            <fullName evidence="1">3-dehydroquinate synthase</fullName>
            <shortName evidence="1">DHQS</shortName>
            <ecNumber evidence="1">4.2.3.4</ecNumber>
        </recommendedName>
    </domain>
    <domain>
        <recommendedName>
            <fullName evidence="1">3-phosphoshikimate 1-carboxyvinyltransferase</fullName>
            <ecNumber evidence="1">2.5.1.19</ecNumber>
        </recommendedName>
        <alternativeName>
            <fullName evidence="1">5-enolpyruvylshikimate-3-phosphate synthase</fullName>
            <shortName evidence="1">EPSP synthase</shortName>
            <shortName evidence="1">EPSPS</shortName>
        </alternativeName>
    </domain>
    <domain>
        <recommendedName>
            <fullName evidence="1">Shikimate kinase</fullName>
            <shortName evidence="1">SK</shortName>
            <ecNumber evidence="1">2.7.1.71</ecNumber>
        </recommendedName>
    </domain>
    <domain>
        <recommendedName>
            <fullName evidence="1">3-dehydroquinate dehydratase</fullName>
            <shortName evidence="1">3-dehydroquinase</shortName>
            <ecNumber evidence="1">4.2.1.10</ecNumber>
        </recommendedName>
    </domain>
    <domain>
        <recommendedName>
            <fullName evidence="1">Shikimate dehydrogenase</fullName>
            <ecNumber evidence="1">1.1.1.25</ecNumber>
        </recommendedName>
    </domain>
</protein>
<name>ARO1_CANTT</name>
<comment type="function">
    <text evidence="1">The AROM polypeptide catalyzes 5 consecutive enzymatic reactions in prechorismate polyaromatic amino acid biosynthesis.</text>
</comment>
<comment type="catalytic activity">
    <reaction evidence="1">
        <text>7-phospho-2-dehydro-3-deoxy-D-arabino-heptonate = 3-dehydroquinate + phosphate</text>
        <dbReference type="Rhea" id="RHEA:21968"/>
        <dbReference type="ChEBI" id="CHEBI:32364"/>
        <dbReference type="ChEBI" id="CHEBI:43474"/>
        <dbReference type="ChEBI" id="CHEBI:58394"/>
        <dbReference type="EC" id="4.2.3.4"/>
    </reaction>
</comment>
<comment type="catalytic activity">
    <reaction evidence="1">
        <text>3-dehydroquinate = 3-dehydroshikimate + H2O</text>
        <dbReference type="Rhea" id="RHEA:21096"/>
        <dbReference type="ChEBI" id="CHEBI:15377"/>
        <dbReference type="ChEBI" id="CHEBI:16630"/>
        <dbReference type="ChEBI" id="CHEBI:32364"/>
        <dbReference type="EC" id="4.2.1.10"/>
    </reaction>
</comment>
<comment type="catalytic activity">
    <reaction evidence="1">
        <text>shikimate + NADP(+) = 3-dehydroshikimate + NADPH + H(+)</text>
        <dbReference type="Rhea" id="RHEA:17737"/>
        <dbReference type="ChEBI" id="CHEBI:15378"/>
        <dbReference type="ChEBI" id="CHEBI:16630"/>
        <dbReference type="ChEBI" id="CHEBI:36208"/>
        <dbReference type="ChEBI" id="CHEBI:57783"/>
        <dbReference type="ChEBI" id="CHEBI:58349"/>
        <dbReference type="EC" id="1.1.1.25"/>
    </reaction>
</comment>
<comment type="catalytic activity">
    <reaction evidence="1">
        <text>shikimate + ATP = 3-phosphoshikimate + ADP + H(+)</text>
        <dbReference type="Rhea" id="RHEA:13121"/>
        <dbReference type="ChEBI" id="CHEBI:15378"/>
        <dbReference type="ChEBI" id="CHEBI:30616"/>
        <dbReference type="ChEBI" id="CHEBI:36208"/>
        <dbReference type="ChEBI" id="CHEBI:145989"/>
        <dbReference type="ChEBI" id="CHEBI:456216"/>
        <dbReference type="EC" id="2.7.1.71"/>
    </reaction>
</comment>
<comment type="catalytic activity">
    <reaction evidence="1">
        <text>3-phosphoshikimate + phosphoenolpyruvate = 5-O-(1-carboxyvinyl)-3-phosphoshikimate + phosphate</text>
        <dbReference type="Rhea" id="RHEA:21256"/>
        <dbReference type="ChEBI" id="CHEBI:43474"/>
        <dbReference type="ChEBI" id="CHEBI:57701"/>
        <dbReference type="ChEBI" id="CHEBI:58702"/>
        <dbReference type="ChEBI" id="CHEBI:145989"/>
        <dbReference type="EC" id="2.5.1.19"/>
    </reaction>
</comment>
<comment type="cofactor">
    <cofactor>
        <name>Zn(2+)</name>
        <dbReference type="ChEBI" id="CHEBI:29105"/>
    </cofactor>
    <text>Binds 2 Zn(2+) ions per subunit.</text>
</comment>
<comment type="pathway">
    <text evidence="1">Metabolic intermediate biosynthesis; chorismate biosynthesis; chorismate from D-erythrose 4-phosphate and phosphoenolpyruvate: step 2/7.</text>
</comment>
<comment type="pathway">
    <text evidence="1">Metabolic intermediate biosynthesis; chorismate biosynthesis; chorismate from D-erythrose 4-phosphate and phosphoenolpyruvate: step 3/7.</text>
</comment>
<comment type="pathway">
    <text evidence="1">Metabolic intermediate biosynthesis; chorismate biosynthesis; chorismate from D-erythrose 4-phosphate and phosphoenolpyruvate: step 4/7.</text>
</comment>
<comment type="pathway">
    <text evidence="1">Metabolic intermediate biosynthesis; chorismate biosynthesis; chorismate from D-erythrose 4-phosphate and phosphoenolpyruvate: step 5/7.</text>
</comment>
<comment type="pathway">
    <text evidence="1">Metabolic intermediate biosynthesis; chorismate biosynthesis; chorismate from D-erythrose 4-phosphate and phosphoenolpyruvate: step 6/7.</text>
</comment>
<comment type="subunit">
    <text evidence="1">Homodimer.</text>
</comment>
<comment type="subcellular location">
    <subcellularLocation>
        <location evidence="1">Cytoplasm</location>
    </subcellularLocation>
</comment>
<comment type="similarity">
    <text evidence="1">In the N-terminal section; belongs to the sugar phosphate cyclases superfamily. Dehydroquinate synthase family.</text>
</comment>
<comment type="similarity">
    <text evidence="1">In the 2nd section; belongs to the EPSP synthase family.</text>
</comment>
<comment type="similarity">
    <text evidence="1">In the 3rd section; belongs to the shikimate kinase family.</text>
</comment>
<comment type="similarity">
    <text evidence="1">In the 4th section; belongs to the type-I 3-dehydroquinase family.</text>
</comment>
<comment type="similarity">
    <text evidence="1">In the C-terminal section; belongs to the shikimate dehydrogenase family.</text>
</comment>
<reference key="1">
    <citation type="journal article" date="2009" name="Nature">
        <title>Evolution of pathogenicity and sexual reproduction in eight Candida genomes.</title>
        <authorList>
            <person name="Butler G."/>
            <person name="Rasmussen M.D."/>
            <person name="Lin M.F."/>
            <person name="Santos M.A.S."/>
            <person name="Sakthikumar S."/>
            <person name="Munro C.A."/>
            <person name="Rheinbay E."/>
            <person name="Grabherr M."/>
            <person name="Forche A."/>
            <person name="Reedy J.L."/>
            <person name="Agrafioti I."/>
            <person name="Arnaud M.B."/>
            <person name="Bates S."/>
            <person name="Brown A.J.P."/>
            <person name="Brunke S."/>
            <person name="Costanzo M.C."/>
            <person name="Fitzpatrick D.A."/>
            <person name="de Groot P.W.J."/>
            <person name="Harris D."/>
            <person name="Hoyer L.L."/>
            <person name="Hube B."/>
            <person name="Klis F.M."/>
            <person name="Kodira C."/>
            <person name="Lennard N."/>
            <person name="Logue M.E."/>
            <person name="Martin R."/>
            <person name="Neiman A.M."/>
            <person name="Nikolaou E."/>
            <person name="Quail M.A."/>
            <person name="Quinn J."/>
            <person name="Santos M.C."/>
            <person name="Schmitzberger F.F."/>
            <person name="Sherlock G."/>
            <person name="Shah P."/>
            <person name="Silverstein K.A.T."/>
            <person name="Skrzypek M.S."/>
            <person name="Soll D."/>
            <person name="Staggs R."/>
            <person name="Stansfield I."/>
            <person name="Stumpf M.P.H."/>
            <person name="Sudbery P.E."/>
            <person name="Srikantha T."/>
            <person name="Zeng Q."/>
            <person name="Berman J."/>
            <person name="Berriman M."/>
            <person name="Heitman J."/>
            <person name="Gow N.A.R."/>
            <person name="Lorenz M.C."/>
            <person name="Birren B.W."/>
            <person name="Kellis M."/>
            <person name="Cuomo C.A."/>
        </authorList>
    </citation>
    <scope>NUCLEOTIDE SEQUENCE [LARGE SCALE GENOMIC DNA]</scope>
    <source>
        <strain>ATCC MYA-3404 / T1</strain>
    </source>
</reference>
<organism>
    <name type="scientific">Candida tropicalis (strain ATCC MYA-3404 / T1)</name>
    <name type="common">Yeast</name>
    <dbReference type="NCBI Taxonomy" id="294747"/>
    <lineage>
        <taxon>Eukaryota</taxon>
        <taxon>Fungi</taxon>
        <taxon>Dikarya</taxon>
        <taxon>Ascomycota</taxon>
        <taxon>Saccharomycotina</taxon>
        <taxon>Pichiomycetes</taxon>
        <taxon>Debaryomycetaceae</taxon>
        <taxon>Candida/Lodderomyces clade</taxon>
        <taxon>Candida</taxon>
    </lineage>
</organism>